<proteinExistence type="inferred from homology"/>
<accession>A0RR62</accession>
<reference key="1">
    <citation type="submission" date="2006-11" db="EMBL/GenBank/DDBJ databases">
        <title>Sequence of Campylobacter fetus subsp. fetus 82-40.</title>
        <authorList>
            <person name="Fouts D.E."/>
            <person name="Nelson K.E."/>
        </authorList>
    </citation>
    <scope>NUCLEOTIDE SEQUENCE [LARGE SCALE GENOMIC DNA]</scope>
    <source>
        <strain>82-40</strain>
    </source>
</reference>
<sequence length="460" mass="52241">MLTTRFAPSPTGFLHVGGLRTALYSYLYARKNGGKFVLRIEDTDLKRNSEEAVIAIREAFNWCGLDYDGEVTYQSKRFDIYKEYIKKLLDEGKAYKCYMTKVELDELRAAQEAKKERPKYDGRYRDFTGTPPAGIEPVIRIKAPLNGTIEFKDGIKGDVKFNCADILDDFIIARSDGTPTYNFCVVIDDALMGITHVIRGDDHLSNTPKQIILYEALGFNLPEFFHVAMINGSDGSKLSKRHGATDVMEYKSMGYLPEALLNFLVRLGWSHGDDEIFSMSDMLKYFDPHDINKSASTYNLTKLDWLNAHYIKTLPYEHLADDMKFFGIDFRAFDKGELLLNSLRERSKTLVELKNSALNIINSPETYDEKAVAKFINTESKELLKEYAANLEDKNISAKDCEDITIAFLEKRDKKLKDIAQPIRIAITGSAVSPSIFEVIEVIGIKELKSRIAALLEKLD</sequence>
<name>SYE2_CAMFF</name>
<comment type="function">
    <text evidence="1">Catalyzes the attachment of glutamate to tRNA(Glu) in a two-step reaction: glutamate is first activated by ATP to form Glu-AMP and then transferred to the acceptor end of tRNA(Glu).</text>
</comment>
<comment type="catalytic activity">
    <reaction evidence="1">
        <text>tRNA(Glu) + L-glutamate + ATP = L-glutamyl-tRNA(Glu) + AMP + diphosphate</text>
        <dbReference type="Rhea" id="RHEA:23540"/>
        <dbReference type="Rhea" id="RHEA-COMP:9663"/>
        <dbReference type="Rhea" id="RHEA-COMP:9680"/>
        <dbReference type="ChEBI" id="CHEBI:29985"/>
        <dbReference type="ChEBI" id="CHEBI:30616"/>
        <dbReference type="ChEBI" id="CHEBI:33019"/>
        <dbReference type="ChEBI" id="CHEBI:78442"/>
        <dbReference type="ChEBI" id="CHEBI:78520"/>
        <dbReference type="ChEBI" id="CHEBI:456215"/>
        <dbReference type="EC" id="6.1.1.17"/>
    </reaction>
</comment>
<comment type="subunit">
    <text evidence="1">Monomer.</text>
</comment>
<comment type="subcellular location">
    <subcellularLocation>
        <location evidence="1">Cytoplasm</location>
    </subcellularLocation>
</comment>
<comment type="similarity">
    <text evidence="1">Belongs to the class-I aminoacyl-tRNA synthetase family. Glutamate--tRNA ligase type 1 subfamily.</text>
</comment>
<organism>
    <name type="scientific">Campylobacter fetus subsp. fetus (strain 82-40)</name>
    <dbReference type="NCBI Taxonomy" id="360106"/>
    <lineage>
        <taxon>Bacteria</taxon>
        <taxon>Pseudomonadati</taxon>
        <taxon>Campylobacterota</taxon>
        <taxon>Epsilonproteobacteria</taxon>
        <taxon>Campylobacterales</taxon>
        <taxon>Campylobacteraceae</taxon>
        <taxon>Campylobacter</taxon>
    </lineage>
</organism>
<gene>
    <name evidence="1" type="primary">gltX2</name>
    <name type="ordered locus">CFF8240_1562</name>
</gene>
<dbReference type="EC" id="6.1.1.17" evidence="1"/>
<dbReference type="EMBL" id="CP000487">
    <property type="protein sequence ID" value="ABK82780.1"/>
    <property type="molecule type" value="Genomic_DNA"/>
</dbReference>
<dbReference type="RefSeq" id="WP_011732243.1">
    <property type="nucleotide sequence ID" value="NC_008599.1"/>
</dbReference>
<dbReference type="SMR" id="A0RR62"/>
<dbReference type="GeneID" id="61065379"/>
<dbReference type="KEGG" id="cff:CFF8240_1562"/>
<dbReference type="PATRIC" id="fig|360106.6.peg.1522"/>
<dbReference type="eggNOG" id="COG0008">
    <property type="taxonomic scope" value="Bacteria"/>
</dbReference>
<dbReference type="HOGENOM" id="CLU_015768_6_3_7"/>
<dbReference type="Proteomes" id="UP000000760">
    <property type="component" value="Chromosome"/>
</dbReference>
<dbReference type="GO" id="GO:0005829">
    <property type="term" value="C:cytosol"/>
    <property type="evidence" value="ECO:0007669"/>
    <property type="project" value="TreeGrafter"/>
</dbReference>
<dbReference type="GO" id="GO:0005524">
    <property type="term" value="F:ATP binding"/>
    <property type="evidence" value="ECO:0007669"/>
    <property type="project" value="UniProtKB-UniRule"/>
</dbReference>
<dbReference type="GO" id="GO:0004818">
    <property type="term" value="F:glutamate-tRNA ligase activity"/>
    <property type="evidence" value="ECO:0007669"/>
    <property type="project" value="UniProtKB-UniRule"/>
</dbReference>
<dbReference type="GO" id="GO:0000049">
    <property type="term" value="F:tRNA binding"/>
    <property type="evidence" value="ECO:0007669"/>
    <property type="project" value="InterPro"/>
</dbReference>
<dbReference type="GO" id="GO:0008270">
    <property type="term" value="F:zinc ion binding"/>
    <property type="evidence" value="ECO:0007669"/>
    <property type="project" value="InterPro"/>
</dbReference>
<dbReference type="GO" id="GO:0006424">
    <property type="term" value="P:glutamyl-tRNA aminoacylation"/>
    <property type="evidence" value="ECO:0007669"/>
    <property type="project" value="UniProtKB-UniRule"/>
</dbReference>
<dbReference type="CDD" id="cd00808">
    <property type="entry name" value="GluRS_core"/>
    <property type="match status" value="1"/>
</dbReference>
<dbReference type="FunFam" id="3.40.50.620:FF:000007">
    <property type="entry name" value="Glutamate--tRNA ligase"/>
    <property type="match status" value="1"/>
</dbReference>
<dbReference type="Gene3D" id="1.10.10.350">
    <property type="match status" value="1"/>
</dbReference>
<dbReference type="Gene3D" id="3.40.50.620">
    <property type="entry name" value="HUPs"/>
    <property type="match status" value="1"/>
</dbReference>
<dbReference type="HAMAP" id="MF_00022">
    <property type="entry name" value="Glu_tRNA_synth_type1"/>
    <property type="match status" value="1"/>
</dbReference>
<dbReference type="InterPro" id="IPR045462">
    <property type="entry name" value="aa-tRNA-synth_I_cd-bd"/>
</dbReference>
<dbReference type="InterPro" id="IPR020751">
    <property type="entry name" value="aa-tRNA-synth_I_codon-bd_sub2"/>
</dbReference>
<dbReference type="InterPro" id="IPR001412">
    <property type="entry name" value="aa-tRNA-synth_I_CS"/>
</dbReference>
<dbReference type="InterPro" id="IPR008925">
    <property type="entry name" value="aa_tRNA-synth_I_cd-bd_sf"/>
</dbReference>
<dbReference type="InterPro" id="IPR004527">
    <property type="entry name" value="Glu-tRNA-ligase_bac/mito"/>
</dbReference>
<dbReference type="InterPro" id="IPR000924">
    <property type="entry name" value="Glu/Gln-tRNA-synth"/>
</dbReference>
<dbReference type="InterPro" id="IPR020058">
    <property type="entry name" value="Glu/Gln-tRNA-synth_Ib_cat-dom"/>
</dbReference>
<dbReference type="InterPro" id="IPR049940">
    <property type="entry name" value="GluQ/Sye"/>
</dbReference>
<dbReference type="InterPro" id="IPR033910">
    <property type="entry name" value="GluRS_core"/>
</dbReference>
<dbReference type="InterPro" id="IPR014729">
    <property type="entry name" value="Rossmann-like_a/b/a_fold"/>
</dbReference>
<dbReference type="NCBIfam" id="TIGR00464">
    <property type="entry name" value="gltX_bact"/>
    <property type="match status" value="1"/>
</dbReference>
<dbReference type="PANTHER" id="PTHR43311">
    <property type="entry name" value="GLUTAMATE--TRNA LIGASE"/>
    <property type="match status" value="1"/>
</dbReference>
<dbReference type="PANTHER" id="PTHR43311:SF2">
    <property type="entry name" value="GLUTAMATE--TRNA LIGASE, MITOCHONDRIAL-RELATED"/>
    <property type="match status" value="1"/>
</dbReference>
<dbReference type="Pfam" id="PF19269">
    <property type="entry name" value="Anticodon_2"/>
    <property type="match status" value="1"/>
</dbReference>
<dbReference type="Pfam" id="PF00749">
    <property type="entry name" value="tRNA-synt_1c"/>
    <property type="match status" value="1"/>
</dbReference>
<dbReference type="PRINTS" id="PR00987">
    <property type="entry name" value="TRNASYNTHGLU"/>
</dbReference>
<dbReference type="SUPFAM" id="SSF48163">
    <property type="entry name" value="An anticodon-binding domain of class I aminoacyl-tRNA synthetases"/>
    <property type="match status" value="1"/>
</dbReference>
<dbReference type="SUPFAM" id="SSF52374">
    <property type="entry name" value="Nucleotidylyl transferase"/>
    <property type="match status" value="1"/>
</dbReference>
<dbReference type="PROSITE" id="PS00178">
    <property type="entry name" value="AA_TRNA_LIGASE_I"/>
    <property type="match status" value="1"/>
</dbReference>
<keyword id="KW-0030">Aminoacyl-tRNA synthetase</keyword>
<keyword id="KW-0067">ATP-binding</keyword>
<keyword id="KW-0963">Cytoplasm</keyword>
<keyword id="KW-0436">Ligase</keyword>
<keyword id="KW-0547">Nucleotide-binding</keyword>
<keyword id="KW-0648">Protein biosynthesis</keyword>
<feature type="chain" id="PRO_0000330959" description="Glutamate--tRNA ligase 2">
    <location>
        <begin position="1"/>
        <end position="460"/>
    </location>
</feature>
<feature type="short sequence motif" description="'HIGH' region" evidence="1">
    <location>
        <begin position="8"/>
        <end position="18"/>
    </location>
</feature>
<feature type="short sequence motif" description="'KMSKS' region" evidence="1">
    <location>
        <begin position="237"/>
        <end position="241"/>
    </location>
</feature>
<feature type="binding site" evidence="1">
    <location>
        <position position="240"/>
    </location>
    <ligand>
        <name>ATP</name>
        <dbReference type="ChEBI" id="CHEBI:30616"/>
    </ligand>
</feature>
<protein>
    <recommendedName>
        <fullName evidence="1">Glutamate--tRNA ligase 2</fullName>
        <ecNumber evidence="1">6.1.1.17</ecNumber>
    </recommendedName>
    <alternativeName>
        <fullName evidence="1">Glutamyl-tRNA synthetase 2</fullName>
        <shortName evidence="1">GluRS 2</shortName>
    </alternativeName>
</protein>
<evidence type="ECO:0000255" key="1">
    <source>
        <dbReference type="HAMAP-Rule" id="MF_00022"/>
    </source>
</evidence>